<proteinExistence type="inferred from homology"/>
<reference key="1">
    <citation type="journal article" date="2002" name="DNA Res.">
        <title>Complete genome structure of the thermophilic cyanobacterium Thermosynechococcus elongatus BP-1.</title>
        <authorList>
            <person name="Nakamura Y."/>
            <person name="Kaneko T."/>
            <person name="Sato S."/>
            <person name="Ikeuchi M."/>
            <person name="Katoh H."/>
            <person name="Sasamoto S."/>
            <person name="Watanabe A."/>
            <person name="Iriguchi M."/>
            <person name="Kawashima K."/>
            <person name="Kimura T."/>
            <person name="Kishida Y."/>
            <person name="Kiyokawa C."/>
            <person name="Kohara M."/>
            <person name="Matsumoto M."/>
            <person name="Matsuno A."/>
            <person name="Nakazaki N."/>
            <person name="Shimpo S."/>
            <person name="Sugimoto M."/>
            <person name="Takeuchi C."/>
            <person name="Yamada M."/>
            <person name="Tabata S."/>
        </authorList>
    </citation>
    <scope>NUCLEOTIDE SEQUENCE [LARGE SCALE GENOMIC DNA]</scope>
    <source>
        <strain>NIES-2133 / IAM M-273 / BP-1</strain>
    </source>
</reference>
<dbReference type="EMBL" id="BA000039">
    <property type="protein sequence ID" value="BAC08603.1"/>
    <property type="molecule type" value="Genomic_DNA"/>
</dbReference>
<dbReference type="RefSeq" id="NP_681841.1">
    <property type="nucleotide sequence ID" value="NC_004113.1"/>
</dbReference>
<dbReference type="SMR" id="Q8DK20"/>
<dbReference type="STRING" id="197221.gene:10747643"/>
<dbReference type="EnsemblBacteria" id="BAC08603">
    <property type="protein sequence ID" value="BAC08603"/>
    <property type="gene ID" value="BAC08603"/>
</dbReference>
<dbReference type="KEGG" id="tel:tlr1050"/>
<dbReference type="PATRIC" id="fig|197221.4.peg.1103"/>
<dbReference type="eggNOG" id="ENOG502Z92X">
    <property type="taxonomic scope" value="Bacteria"/>
</dbReference>
<dbReference type="Proteomes" id="UP000000440">
    <property type="component" value="Chromosome"/>
</dbReference>
<dbReference type="GO" id="GO:0009522">
    <property type="term" value="C:photosystem I"/>
    <property type="evidence" value="ECO:0007669"/>
    <property type="project" value="UniProtKB-KW"/>
</dbReference>
<dbReference type="GO" id="GO:0031676">
    <property type="term" value="C:plasma membrane-derived thylakoid membrane"/>
    <property type="evidence" value="ECO:0007669"/>
    <property type="project" value="UniProtKB-SubCell"/>
</dbReference>
<dbReference type="GO" id="GO:0016168">
    <property type="term" value="F:chlorophyll binding"/>
    <property type="evidence" value="ECO:0007669"/>
    <property type="project" value="UniProtKB-KW"/>
</dbReference>
<dbReference type="GO" id="GO:0009767">
    <property type="term" value="P:photosynthetic electron transport chain"/>
    <property type="evidence" value="ECO:0007669"/>
    <property type="project" value="InterPro"/>
</dbReference>
<dbReference type="InterPro" id="IPR000932">
    <property type="entry name" value="PS_antenna-like"/>
</dbReference>
<dbReference type="InterPro" id="IPR036001">
    <property type="entry name" value="PS_II_antenna-like_sf"/>
</dbReference>
<dbReference type="NCBIfam" id="TIGR03041">
    <property type="entry name" value="PS_antenn_a_b"/>
    <property type="match status" value="1"/>
</dbReference>
<dbReference type="Pfam" id="PF00421">
    <property type="entry name" value="PSII"/>
    <property type="match status" value="1"/>
</dbReference>
<dbReference type="SUPFAM" id="SSF161077">
    <property type="entry name" value="Photosystem II antenna protein-like"/>
    <property type="match status" value="1"/>
</dbReference>
<evidence type="ECO:0000250" key="1">
    <source>
        <dbReference type="UniProtKB" id="Q55274"/>
    </source>
</evidence>
<evidence type="ECO:0000255" key="2"/>
<evidence type="ECO:0000305" key="3"/>
<feature type="chain" id="PRO_0000077558" description="Iron stress-induced chlorophyll-binding protein">
    <location>
        <begin position="1"/>
        <end position="358"/>
    </location>
</feature>
<feature type="transmembrane region" description="Helical" evidence="2">
    <location>
        <begin position="40"/>
        <end position="60"/>
    </location>
</feature>
<feature type="transmembrane region" description="Helical" evidence="2">
    <location>
        <begin position="79"/>
        <end position="99"/>
    </location>
</feature>
<feature type="transmembrane region" description="Helical" evidence="2">
    <location>
        <begin position="104"/>
        <end position="124"/>
    </location>
</feature>
<feature type="transmembrane region" description="Helical" evidence="2">
    <location>
        <begin position="219"/>
        <end position="239"/>
    </location>
</feature>
<feature type="transmembrane region" description="Helical" evidence="2">
    <location>
        <begin position="255"/>
        <end position="275"/>
    </location>
</feature>
<feature type="transmembrane region" description="Helical" evidence="2">
    <location>
        <begin position="318"/>
        <end position="338"/>
    </location>
</feature>
<sequence>MAIASESPTTVTSAGLQTYGQTNVKYDWWAGNARFVNLSGLFIAAHVAQAALSVFWAGAFTLYEISQYKPDLPMGEQGLILLPHLATLGFGIGEGGKVVDLYPYFVIGAVHLISSAVLGAGALFHTFRAPHDLSTATGRARRFHFRWDDPKQLGIILGHHLLFLGFGALLLVLKATIWGGLYDANLQTVRLITQPTLDPFVIYGYQTHFASINSLEDLVGGHIYIAILLIAGGIWHILVPPLTWARKLLMFNAEAILSYSLGGIALAGFVAAYFCAVNTLAYPVEFYGPPLEVKLGIAPYFADTIELPLGQHTSRAWLANAHFFLAFFFLQGHLWHALRAMGFNFKQLETFLNPAIEN</sequence>
<organism>
    <name type="scientific">Thermosynechococcus vestitus (strain NIES-2133 / IAM M-273 / BP-1)</name>
    <dbReference type="NCBI Taxonomy" id="197221"/>
    <lineage>
        <taxon>Bacteria</taxon>
        <taxon>Bacillati</taxon>
        <taxon>Cyanobacteriota</taxon>
        <taxon>Cyanophyceae</taxon>
        <taxon>Acaryochloridales</taxon>
        <taxon>Thermosynechococcaceae</taxon>
        <taxon>Thermosynechococcus</taxon>
    </lineage>
</organism>
<comment type="function">
    <text evidence="1">Functions as an antenna for photosystem I (PSI) under iron-limiting conditions, when phycobilisomes disappear. In the (PSI)3(Isi3)18 complex most of the harvested energy is probably used by PSI; in other PSI-containing supercomplexes a large part of the energy will probably not be used for light harvesting, but rather is dissipated to protect the organism from light damage.</text>
</comment>
<comment type="cofactor">
    <cofactor evidence="1">
        <name>chlorophyll a</name>
        <dbReference type="ChEBI" id="CHEBI:58416"/>
    </cofactor>
    <text evidence="1">Chlorophyll a.</text>
</comment>
<comment type="cofactor">
    <cofactor evidence="1">
        <name>all-trans-beta-carotene</name>
        <dbReference type="ChEBI" id="CHEBI:17579"/>
    </cofactor>
</comment>
<comment type="subunit">
    <text evidence="1">Under iron-starvation forms a complex with PSI trimers, where the trimer is surrounded by a ring composed of 18 IsiA subunits.</text>
</comment>
<comment type="subcellular location">
    <subcellularLocation>
        <location evidence="1">Cellular thylakoid membrane</location>
        <topology evidence="3">Multi-pass membrane protein</topology>
    </subcellularLocation>
</comment>
<comment type="induction">
    <text evidence="1">By iron stress.</text>
</comment>
<comment type="similarity">
    <text evidence="3">Belongs to the PsbB/PsbC family. IsiA/Pcb subfamily.</text>
</comment>
<accession>Q8DK20</accession>
<name>ISIA_THEVB</name>
<keyword id="KW-0148">Chlorophyll</keyword>
<keyword id="KW-0157">Chromophore</keyword>
<keyword id="KW-0472">Membrane</keyword>
<keyword id="KW-0602">Photosynthesis</keyword>
<keyword id="KW-0603">Photosystem I</keyword>
<keyword id="KW-1185">Reference proteome</keyword>
<keyword id="KW-0346">Stress response</keyword>
<keyword id="KW-0793">Thylakoid</keyword>
<keyword id="KW-0812">Transmembrane</keyword>
<keyword id="KW-1133">Transmembrane helix</keyword>
<protein>
    <recommendedName>
        <fullName>Iron stress-induced chlorophyll-binding protein</fullName>
    </recommendedName>
    <alternativeName>
        <fullName>CP43'</fullName>
    </alternativeName>
</protein>
<gene>
    <name type="primary">isiA</name>
    <name type="ordered locus">tlr1050</name>
</gene>